<gene>
    <name evidence="1" type="primary">ackA</name>
    <name type="ordered locus">CJJ81176_0712</name>
</gene>
<evidence type="ECO:0000255" key="1">
    <source>
        <dbReference type="HAMAP-Rule" id="MF_00020"/>
    </source>
</evidence>
<sequence length="396" mass="43995">MKILVLNSGSSSIKFKFFDNKIVKASGLVEKIGEQNSKVILKNVLNNESFERELTINNHEEGLSIVNELFKESGILADLNALDGCGHRIVHGGRNLSEHCLVDDYVLKEIDRVSIFAPLHNPAHLAGIKTMIKAAPSVANVAIFDTAFHRTMPDFAYMYALPYDFYDKHNIRRYGFHGTSHAFVSSRAASLLEKDKSELNVISAHLGNGASVCAIEKGKSVDTSMGFTPLEGLVMGTRCGDLDPAILPFISHLKGLTIEEIDTLMNKKSGVYGICGYNDFRDIEREIEQGNDKARLALDMFCYRLVKYIGSYFAVLPKTDAIIFTGGIGENDSLVRQKVCERLAHLGIELDFELNKQRISGERMINHANSKVKVLVIPTDEELEIARITEELIGKN</sequence>
<keyword id="KW-0067">ATP-binding</keyword>
<keyword id="KW-0963">Cytoplasm</keyword>
<keyword id="KW-0418">Kinase</keyword>
<keyword id="KW-0460">Magnesium</keyword>
<keyword id="KW-0479">Metal-binding</keyword>
<keyword id="KW-0547">Nucleotide-binding</keyword>
<keyword id="KW-0808">Transferase</keyword>
<proteinExistence type="inferred from homology"/>
<comment type="function">
    <text evidence="1">Catalyzes the formation of acetyl phosphate from acetate and ATP. Can also catalyze the reverse reaction.</text>
</comment>
<comment type="catalytic activity">
    <reaction evidence="1">
        <text>acetate + ATP = acetyl phosphate + ADP</text>
        <dbReference type="Rhea" id="RHEA:11352"/>
        <dbReference type="ChEBI" id="CHEBI:22191"/>
        <dbReference type="ChEBI" id="CHEBI:30089"/>
        <dbReference type="ChEBI" id="CHEBI:30616"/>
        <dbReference type="ChEBI" id="CHEBI:456216"/>
        <dbReference type="EC" id="2.7.2.1"/>
    </reaction>
</comment>
<comment type="cofactor">
    <cofactor evidence="1">
        <name>Mg(2+)</name>
        <dbReference type="ChEBI" id="CHEBI:18420"/>
    </cofactor>
    <cofactor evidence="1">
        <name>Mn(2+)</name>
        <dbReference type="ChEBI" id="CHEBI:29035"/>
    </cofactor>
    <text evidence="1">Mg(2+). Can also accept Mn(2+).</text>
</comment>
<comment type="pathway">
    <text evidence="1">Metabolic intermediate biosynthesis; acetyl-CoA biosynthesis; acetyl-CoA from acetate: step 1/2.</text>
</comment>
<comment type="subunit">
    <text evidence="1">Homodimer.</text>
</comment>
<comment type="subcellular location">
    <subcellularLocation>
        <location evidence="1">Cytoplasm</location>
    </subcellularLocation>
</comment>
<comment type="similarity">
    <text evidence="1">Belongs to the acetokinase family.</text>
</comment>
<reference key="1">
    <citation type="submission" date="2006-12" db="EMBL/GenBank/DDBJ databases">
        <authorList>
            <person name="Fouts D.E."/>
            <person name="Nelson K.E."/>
            <person name="Sebastian Y."/>
        </authorList>
    </citation>
    <scope>NUCLEOTIDE SEQUENCE [LARGE SCALE GENOMIC DNA]</scope>
    <source>
        <strain>81-176</strain>
    </source>
</reference>
<feature type="chain" id="PRO_1000002217" description="Acetate kinase">
    <location>
        <begin position="1"/>
        <end position="396"/>
    </location>
</feature>
<feature type="active site" description="Proton donor/acceptor" evidence="1">
    <location>
        <position position="145"/>
    </location>
</feature>
<feature type="binding site" evidence="1">
    <location>
        <position position="7"/>
    </location>
    <ligand>
        <name>Mg(2+)</name>
        <dbReference type="ChEBI" id="CHEBI:18420"/>
    </ligand>
</feature>
<feature type="binding site" evidence="1">
    <location>
        <position position="14"/>
    </location>
    <ligand>
        <name>ATP</name>
        <dbReference type="ChEBI" id="CHEBI:30616"/>
    </ligand>
</feature>
<feature type="binding site" evidence="1">
    <location>
        <position position="88"/>
    </location>
    <ligand>
        <name>substrate</name>
    </ligand>
</feature>
<feature type="binding site" evidence="1">
    <location>
        <begin position="205"/>
        <end position="209"/>
    </location>
    <ligand>
        <name>ATP</name>
        <dbReference type="ChEBI" id="CHEBI:30616"/>
    </ligand>
</feature>
<feature type="binding site" evidence="1">
    <location>
        <begin position="279"/>
        <end position="281"/>
    </location>
    <ligand>
        <name>ATP</name>
        <dbReference type="ChEBI" id="CHEBI:30616"/>
    </ligand>
</feature>
<feature type="binding site" evidence="1">
    <location>
        <begin position="327"/>
        <end position="331"/>
    </location>
    <ligand>
        <name>ATP</name>
        <dbReference type="ChEBI" id="CHEBI:30616"/>
    </ligand>
</feature>
<feature type="binding site" evidence="1">
    <location>
        <position position="381"/>
    </location>
    <ligand>
        <name>Mg(2+)</name>
        <dbReference type="ChEBI" id="CHEBI:18420"/>
    </ligand>
</feature>
<feature type="site" description="Transition state stabilizer" evidence="1">
    <location>
        <position position="177"/>
    </location>
</feature>
<feature type="site" description="Transition state stabilizer" evidence="1">
    <location>
        <position position="238"/>
    </location>
</feature>
<accession>A1VZ44</accession>
<dbReference type="EC" id="2.7.2.1" evidence="1"/>
<dbReference type="EMBL" id="CP000538">
    <property type="protein sequence ID" value="EAQ72452.1"/>
    <property type="molecule type" value="Genomic_DNA"/>
</dbReference>
<dbReference type="RefSeq" id="WP_009882368.1">
    <property type="nucleotide sequence ID" value="NC_008787.1"/>
</dbReference>
<dbReference type="SMR" id="A1VZ44"/>
<dbReference type="KEGG" id="cjj:CJJ81176_0712"/>
<dbReference type="eggNOG" id="COG0282">
    <property type="taxonomic scope" value="Bacteria"/>
</dbReference>
<dbReference type="HOGENOM" id="CLU_020352_0_1_7"/>
<dbReference type="UniPathway" id="UPA00340">
    <property type="reaction ID" value="UER00458"/>
</dbReference>
<dbReference type="Proteomes" id="UP000000646">
    <property type="component" value="Chromosome"/>
</dbReference>
<dbReference type="GO" id="GO:0005737">
    <property type="term" value="C:cytoplasm"/>
    <property type="evidence" value="ECO:0007669"/>
    <property type="project" value="UniProtKB-SubCell"/>
</dbReference>
<dbReference type="GO" id="GO:0008776">
    <property type="term" value="F:acetate kinase activity"/>
    <property type="evidence" value="ECO:0007669"/>
    <property type="project" value="UniProtKB-UniRule"/>
</dbReference>
<dbReference type="GO" id="GO:0005524">
    <property type="term" value="F:ATP binding"/>
    <property type="evidence" value="ECO:0007669"/>
    <property type="project" value="UniProtKB-KW"/>
</dbReference>
<dbReference type="GO" id="GO:0000287">
    <property type="term" value="F:magnesium ion binding"/>
    <property type="evidence" value="ECO:0007669"/>
    <property type="project" value="UniProtKB-UniRule"/>
</dbReference>
<dbReference type="GO" id="GO:0006083">
    <property type="term" value="P:acetate metabolic process"/>
    <property type="evidence" value="ECO:0007669"/>
    <property type="project" value="TreeGrafter"/>
</dbReference>
<dbReference type="GO" id="GO:0006085">
    <property type="term" value="P:acetyl-CoA biosynthetic process"/>
    <property type="evidence" value="ECO:0007669"/>
    <property type="project" value="UniProtKB-UniRule"/>
</dbReference>
<dbReference type="CDD" id="cd24010">
    <property type="entry name" value="ASKHA_NBD_AcK_PK"/>
    <property type="match status" value="1"/>
</dbReference>
<dbReference type="Gene3D" id="3.30.420.40">
    <property type="match status" value="2"/>
</dbReference>
<dbReference type="HAMAP" id="MF_00020">
    <property type="entry name" value="Acetate_kinase"/>
    <property type="match status" value="1"/>
</dbReference>
<dbReference type="InterPro" id="IPR004372">
    <property type="entry name" value="Ac/propionate_kinase"/>
</dbReference>
<dbReference type="InterPro" id="IPR000890">
    <property type="entry name" value="Aliphatic_acid_kin_short-chain"/>
</dbReference>
<dbReference type="InterPro" id="IPR023865">
    <property type="entry name" value="Aliphatic_acid_kinase_CS"/>
</dbReference>
<dbReference type="InterPro" id="IPR043129">
    <property type="entry name" value="ATPase_NBD"/>
</dbReference>
<dbReference type="NCBIfam" id="TIGR00016">
    <property type="entry name" value="ackA"/>
    <property type="match status" value="1"/>
</dbReference>
<dbReference type="PANTHER" id="PTHR21060">
    <property type="entry name" value="ACETATE KINASE"/>
    <property type="match status" value="1"/>
</dbReference>
<dbReference type="PANTHER" id="PTHR21060:SF15">
    <property type="entry name" value="ACETATE KINASE-RELATED"/>
    <property type="match status" value="1"/>
</dbReference>
<dbReference type="Pfam" id="PF00871">
    <property type="entry name" value="Acetate_kinase"/>
    <property type="match status" value="1"/>
</dbReference>
<dbReference type="PIRSF" id="PIRSF000722">
    <property type="entry name" value="Acetate_prop_kin"/>
    <property type="match status" value="1"/>
</dbReference>
<dbReference type="PRINTS" id="PR00471">
    <property type="entry name" value="ACETATEKNASE"/>
</dbReference>
<dbReference type="SUPFAM" id="SSF53067">
    <property type="entry name" value="Actin-like ATPase domain"/>
    <property type="match status" value="2"/>
</dbReference>
<dbReference type="PROSITE" id="PS01075">
    <property type="entry name" value="ACETATE_KINASE_1"/>
    <property type="match status" value="1"/>
</dbReference>
<dbReference type="PROSITE" id="PS01076">
    <property type="entry name" value="ACETATE_KINASE_2"/>
    <property type="match status" value="1"/>
</dbReference>
<protein>
    <recommendedName>
        <fullName evidence="1">Acetate kinase</fullName>
        <ecNumber evidence="1">2.7.2.1</ecNumber>
    </recommendedName>
    <alternativeName>
        <fullName evidence="1">Acetokinase</fullName>
    </alternativeName>
</protein>
<organism>
    <name type="scientific">Campylobacter jejuni subsp. jejuni serotype O:23/36 (strain 81-176)</name>
    <dbReference type="NCBI Taxonomy" id="354242"/>
    <lineage>
        <taxon>Bacteria</taxon>
        <taxon>Pseudomonadati</taxon>
        <taxon>Campylobacterota</taxon>
        <taxon>Epsilonproteobacteria</taxon>
        <taxon>Campylobacterales</taxon>
        <taxon>Campylobacteraceae</taxon>
        <taxon>Campylobacter</taxon>
    </lineage>
</organism>
<name>ACKA_CAMJJ</name>